<evidence type="ECO:0000255" key="1">
    <source>
        <dbReference type="HAMAP-Rule" id="MF_00337"/>
    </source>
</evidence>
<accession>A4IQR9</accession>
<keyword id="KW-0963">Cytoplasm</keyword>
<keyword id="KW-0269">Exonuclease</keyword>
<keyword id="KW-0378">Hydrolase</keyword>
<keyword id="KW-0540">Nuclease</keyword>
<protein>
    <recommendedName>
        <fullName evidence="1">Exodeoxyribonuclease 7 small subunit</fullName>
        <ecNumber evidence="1">3.1.11.6</ecNumber>
    </recommendedName>
    <alternativeName>
        <fullName evidence="1">Exodeoxyribonuclease VII small subunit</fullName>
        <shortName evidence="1">Exonuclease VII small subunit</shortName>
    </alternativeName>
</protein>
<sequence>MSEEKEMTFEEAMKQLESIVEKLEEGNVPLEDAIAFFQEGMKLSKLCHDKLQHVEKQLEYMLREDGELVPFSPEEA</sequence>
<comment type="function">
    <text evidence="1">Bidirectionally degrades single-stranded DNA into large acid-insoluble oligonucleotides, which are then degraded further into small acid-soluble oligonucleotides.</text>
</comment>
<comment type="catalytic activity">
    <reaction evidence="1">
        <text>Exonucleolytic cleavage in either 5'- to 3'- or 3'- to 5'-direction to yield nucleoside 5'-phosphates.</text>
        <dbReference type="EC" id="3.1.11.6"/>
    </reaction>
</comment>
<comment type="subunit">
    <text evidence="1">Heterooligomer composed of large and small subunits.</text>
</comment>
<comment type="subcellular location">
    <subcellularLocation>
        <location evidence="1">Cytoplasm</location>
    </subcellularLocation>
</comment>
<comment type="similarity">
    <text evidence="1">Belongs to the XseB family.</text>
</comment>
<dbReference type="EC" id="3.1.11.6" evidence="1"/>
<dbReference type="EMBL" id="CP000557">
    <property type="protein sequence ID" value="ABO67673.1"/>
    <property type="molecule type" value="Genomic_DNA"/>
</dbReference>
<dbReference type="RefSeq" id="WP_008879804.1">
    <property type="nucleotide sequence ID" value="NC_009328.1"/>
</dbReference>
<dbReference type="SMR" id="A4IQR9"/>
<dbReference type="GeneID" id="87623579"/>
<dbReference type="KEGG" id="gtn:GTNG_2324"/>
<dbReference type="eggNOG" id="COG1722">
    <property type="taxonomic scope" value="Bacteria"/>
</dbReference>
<dbReference type="HOGENOM" id="CLU_145918_3_1_9"/>
<dbReference type="Proteomes" id="UP000001578">
    <property type="component" value="Chromosome"/>
</dbReference>
<dbReference type="GO" id="GO:0005829">
    <property type="term" value="C:cytosol"/>
    <property type="evidence" value="ECO:0007669"/>
    <property type="project" value="TreeGrafter"/>
</dbReference>
<dbReference type="GO" id="GO:0009318">
    <property type="term" value="C:exodeoxyribonuclease VII complex"/>
    <property type="evidence" value="ECO:0007669"/>
    <property type="project" value="InterPro"/>
</dbReference>
<dbReference type="GO" id="GO:0008855">
    <property type="term" value="F:exodeoxyribonuclease VII activity"/>
    <property type="evidence" value="ECO:0007669"/>
    <property type="project" value="UniProtKB-UniRule"/>
</dbReference>
<dbReference type="GO" id="GO:0006308">
    <property type="term" value="P:DNA catabolic process"/>
    <property type="evidence" value="ECO:0007669"/>
    <property type="project" value="UniProtKB-UniRule"/>
</dbReference>
<dbReference type="Gene3D" id="1.10.287.1040">
    <property type="entry name" value="Exonuclease VII, small subunit"/>
    <property type="match status" value="1"/>
</dbReference>
<dbReference type="HAMAP" id="MF_00337">
    <property type="entry name" value="Exonuc_7_S"/>
    <property type="match status" value="1"/>
</dbReference>
<dbReference type="InterPro" id="IPR003761">
    <property type="entry name" value="Exonuc_VII_S"/>
</dbReference>
<dbReference type="InterPro" id="IPR037004">
    <property type="entry name" value="Exonuc_VII_ssu_sf"/>
</dbReference>
<dbReference type="NCBIfam" id="NF002138">
    <property type="entry name" value="PRK00977.1-2"/>
    <property type="match status" value="1"/>
</dbReference>
<dbReference type="NCBIfam" id="NF010666">
    <property type="entry name" value="PRK14063.1"/>
    <property type="match status" value="1"/>
</dbReference>
<dbReference type="NCBIfam" id="TIGR01280">
    <property type="entry name" value="xseB"/>
    <property type="match status" value="1"/>
</dbReference>
<dbReference type="PANTHER" id="PTHR34137">
    <property type="entry name" value="EXODEOXYRIBONUCLEASE 7 SMALL SUBUNIT"/>
    <property type="match status" value="1"/>
</dbReference>
<dbReference type="PANTHER" id="PTHR34137:SF1">
    <property type="entry name" value="EXODEOXYRIBONUCLEASE 7 SMALL SUBUNIT"/>
    <property type="match status" value="1"/>
</dbReference>
<dbReference type="Pfam" id="PF02609">
    <property type="entry name" value="Exonuc_VII_S"/>
    <property type="match status" value="1"/>
</dbReference>
<dbReference type="PIRSF" id="PIRSF006488">
    <property type="entry name" value="Exonuc_VII_S"/>
    <property type="match status" value="1"/>
</dbReference>
<dbReference type="SUPFAM" id="SSF116842">
    <property type="entry name" value="XseB-like"/>
    <property type="match status" value="1"/>
</dbReference>
<organism>
    <name type="scientific">Geobacillus thermodenitrificans (strain NG80-2)</name>
    <dbReference type="NCBI Taxonomy" id="420246"/>
    <lineage>
        <taxon>Bacteria</taxon>
        <taxon>Bacillati</taxon>
        <taxon>Bacillota</taxon>
        <taxon>Bacilli</taxon>
        <taxon>Bacillales</taxon>
        <taxon>Anoxybacillaceae</taxon>
        <taxon>Geobacillus</taxon>
    </lineage>
</organism>
<gene>
    <name evidence="1" type="primary">xseB</name>
    <name type="ordered locus">GTNG_2324</name>
</gene>
<proteinExistence type="inferred from homology"/>
<name>EX7S_GEOTN</name>
<reference key="1">
    <citation type="journal article" date="2007" name="Proc. Natl. Acad. Sci. U.S.A.">
        <title>Genome and proteome of long-chain alkane degrading Geobacillus thermodenitrificans NG80-2 isolated from a deep-subsurface oil reservoir.</title>
        <authorList>
            <person name="Feng L."/>
            <person name="Wang W."/>
            <person name="Cheng J."/>
            <person name="Ren Y."/>
            <person name="Zhao G."/>
            <person name="Gao C."/>
            <person name="Tang Y."/>
            <person name="Liu X."/>
            <person name="Han W."/>
            <person name="Peng X."/>
            <person name="Liu R."/>
            <person name="Wang L."/>
        </authorList>
    </citation>
    <scope>NUCLEOTIDE SEQUENCE [LARGE SCALE GENOMIC DNA]</scope>
    <source>
        <strain>NG80-2</strain>
    </source>
</reference>
<feature type="chain" id="PRO_0000303709" description="Exodeoxyribonuclease 7 small subunit">
    <location>
        <begin position="1"/>
        <end position="76"/>
    </location>
</feature>